<feature type="chain" id="PRO_0000296762" description="Probable potassium transport system protein Kup 1">
    <location>
        <begin position="1"/>
        <end position="625"/>
    </location>
</feature>
<feature type="transmembrane region" description="Helical" evidence="1">
    <location>
        <begin position="14"/>
        <end position="34"/>
    </location>
</feature>
<feature type="transmembrane region" description="Helical" evidence="1">
    <location>
        <begin position="50"/>
        <end position="70"/>
    </location>
</feature>
<feature type="transmembrane region" description="Helical" evidence="1">
    <location>
        <begin position="104"/>
        <end position="124"/>
    </location>
</feature>
<feature type="transmembrane region" description="Helical" evidence="1">
    <location>
        <begin position="139"/>
        <end position="159"/>
    </location>
</feature>
<feature type="transmembrane region" description="Helical" evidence="1">
    <location>
        <begin position="170"/>
        <end position="190"/>
    </location>
</feature>
<feature type="transmembrane region" description="Helical" evidence="1">
    <location>
        <begin position="213"/>
        <end position="233"/>
    </location>
</feature>
<feature type="transmembrane region" description="Helical" evidence="1">
    <location>
        <begin position="249"/>
        <end position="269"/>
    </location>
</feature>
<feature type="transmembrane region" description="Helical" evidence="1">
    <location>
        <begin position="287"/>
        <end position="307"/>
    </location>
</feature>
<feature type="transmembrane region" description="Helical" evidence="1">
    <location>
        <begin position="339"/>
        <end position="359"/>
    </location>
</feature>
<feature type="transmembrane region" description="Helical" evidence="1">
    <location>
        <begin position="368"/>
        <end position="388"/>
    </location>
</feature>
<feature type="transmembrane region" description="Helical" evidence="1">
    <location>
        <begin position="396"/>
        <end position="416"/>
    </location>
</feature>
<feature type="transmembrane region" description="Helical" evidence="1">
    <location>
        <begin position="421"/>
        <end position="441"/>
    </location>
</feature>
<sequence>MNANLAHQPPQGRLSLLALSALGIVFGDIGTSPLYTFKTILGTGGQPTGAAAVLGALSLVIWTLFIITTVKYVMFAMRVDNDGEGGILALMALLGVKRQRRPTIVALGLFGAALIYGDGAITPAISVLSALEGLNMAAPALQPYVVPAAVVILLALFAIQSRGTASIGRLFGPVMLLWFVTIAVLGLVGIARHPTVFAAINPSYGLSYLVSNGATGFLVLGSVFLCVTGAEALYADMGHFGAGPIKLAWFAVVFPSLIINYAGQAALVIDGAPTDGNIFFRLCPDGLLLPLIGLATLATIIASQSVITGAFSMTRQAIQLGWMPRLAIKQTSSEGYGQIYVGAVNWLLMLVTVSLTIGFGKSDNLASAYGIAVSLTMLMTSALLFIAMREIWQWSLLAAGAVAGVFLTIDSAFFLANLTKIAEGGYVPLLLATSVYGLMWIWHRGAAAVAERMRERLIPVAQFMADIAEKKVPRVPGTAVFLTRTERGAPPVMLWHVKHNRALHEHLLVLRVEVISIPWVAPDDRLKIEELAPNVWRAEATFGFMERPHIPELLKASKARGCRIDLDDITYYVGHETVTARDDGKGLPAWQEQLFAAMERNSLHVSDFFSLPRDSVVEIGRQVAI</sequence>
<dbReference type="EMBL" id="CU234118">
    <property type="protein sequence ID" value="CAL75357.1"/>
    <property type="molecule type" value="Genomic_DNA"/>
</dbReference>
<dbReference type="RefSeq" id="WP_011924592.1">
    <property type="nucleotide sequence ID" value="NC_009445.1"/>
</dbReference>
<dbReference type="SMR" id="A4YN81"/>
<dbReference type="STRING" id="114615.BRADO1466"/>
<dbReference type="KEGG" id="bra:BRADO1466"/>
<dbReference type="eggNOG" id="COG3158">
    <property type="taxonomic scope" value="Bacteria"/>
</dbReference>
<dbReference type="HOGENOM" id="CLU_008142_4_2_5"/>
<dbReference type="OrthoDB" id="9805577at2"/>
<dbReference type="Proteomes" id="UP000001994">
    <property type="component" value="Chromosome"/>
</dbReference>
<dbReference type="GO" id="GO:0005886">
    <property type="term" value="C:plasma membrane"/>
    <property type="evidence" value="ECO:0007669"/>
    <property type="project" value="UniProtKB-SubCell"/>
</dbReference>
<dbReference type="GO" id="GO:0015079">
    <property type="term" value="F:potassium ion transmembrane transporter activity"/>
    <property type="evidence" value="ECO:0007669"/>
    <property type="project" value="UniProtKB-UniRule"/>
</dbReference>
<dbReference type="GO" id="GO:0015293">
    <property type="term" value="F:symporter activity"/>
    <property type="evidence" value="ECO:0007669"/>
    <property type="project" value="UniProtKB-UniRule"/>
</dbReference>
<dbReference type="HAMAP" id="MF_01522">
    <property type="entry name" value="Kup"/>
    <property type="match status" value="1"/>
</dbReference>
<dbReference type="InterPro" id="IPR003855">
    <property type="entry name" value="K+_transporter"/>
</dbReference>
<dbReference type="InterPro" id="IPR053952">
    <property type="entry name" value="K_trans_C"/>
</dbReference>
<dbReference type="InterPro" id="IPR053951">
    <property type="entry name" value="K_trans_N"/>
</dbReference>
<dbReference type="InterPro" id="IPR023051">
    <property type="entry name" value="Kup"/>
</dbReference>
<dbReference type="PANTHER" id="PTHR30540:SF83">
    <property type="entry name" value="K+ POTASSIUM TRANSPORTER"/>
    <property type="match status" value="1"/>
</dbReference>
<dbReference type="PANTHER" id="PTHR30540">
    <property type="entry name" value="OSMOTIC STRESS POTASSIUM TRANSPORTER"/>
    <property type="match status" value="1"/>
</dbReference>
<dbReference type="Pfam" id="PF02705">
    <property type="entry name" value="K_trans"/>
    <property type="match status" value="1"/>
</dbReference>
<dbReference type="Pfam" id="PF22776">
    <property type="entry name" value="K_trans_C"/>
    <property type="match status" value="1"/>
</dbReference>
<proteinExistence type="inferred from homology"/>
<comment type="function">
    <text evidence="1">Transport of potassium into the cell. Likely operates as a K(+):H(+) symporter.</text>
</comment>
<comment type="catalytic activity">
    <reaction evidence="1">
        <text>K(+)(in) + H(+)(in) = K(+)(out) + H(+)(out)</text>
        <dbReference type="Rhea" id="RHEA:28490"/>
        <dbReference type="ChEBI" id="CHEBI:15378"/>
        <dbReference type="ChEBI" id="CHEBI:29103"/>
    </reaction>
    <physiologicalReaction direction="right-to-left" evidence="1">
        <dbReference type="Rhea" id="RHEA:28492"/>
    </physiologicalReaction>
</comment>
<comment type="subcellular location">
    <subcellularLocation>
        <location evidence="1">Cell inner membrane</location>
        <topology evidence="1">Multi-pass membrane protein</topology>
    </subcellularLocation>
</comment>
<comment type="similarity">
    <text evidence="1">Belongs to the HAK/KUP transporter (TC 2.A.72) family.</text>
</comment>
<gene>
    <name evidence="1" type="primary">kup1</name>
    <name type="ordered locus">BRADO1466</name>
</gene>
<name>KUP1_BRASO</name>
<organism>
    <name type="scientific">Bradyrhizobium sp. (strain ORS 278)</name>
    <dbReference type="NCBI Taxonomy" id="114615"/>
    <lineage>
        <taxon>Bacteria</taxon>
        <taxon>Pseudomonadati</taxon>
        <taxon>Pseudomonadota</taxon>
        <taxon>Alphaproteobacteria</taxon>
        <taxon>Hyphomicrobiales</taxon>
        <taxon>Nitrobacteraceae</taxon>
        <taxon>Bradyrhizobium</taxon>
    </lineage>
</organism>
<evidence type="ECO:0000255" key="1">
    <source>
        <dbReference type="HAMAP-Rule" id="MF_01522"/>
    </source>
</evidence>
<reference key="1">
    <citation type="journal article" date="2007" name="Science">
        <title>Legumes symbioses: absence of nod genes in photosynthetic bradyrhizobia.</title>
        <authorList>
            <person name="Giraud E."/>
            <person name="Moulin L."/>
            <person name="Vallenet D."/>
            <person name="Barbe V."/>
            <person name="Cytryn E."/>
            <person name="Avarre J.-C."/>
            <person name="Jaubert M."/>
            <person name="Simon D."/>
            <person name="Cartieaux F."/>
            <person name="Prin Y."/>
            <person name="Bena G."/>
            <person name="Hannibal L."/>
            <person name="Fardoux J."/>
            <person name="Kojadinovic M."/>
            <person name="Vuillet L."/>
            <person name="Lajus A."/>
            <person name="Cruveiller S."/>
            <person name="Rouy Z."/>
            <person name="Mangenot S."/>
            <person name="Segurens B."/>
            <person name="Dossat C."/>
            <person name="Franck W.L."/>
            <person name="Chang W.-S."/>
            <person name="Saunders E."/>
            <person name="Bruce D."/>
            <person name="Richardson P."/>
            <person name="Normand P."/>
            <person name="Dreyfus B."/>
            <person name="Pignol D."/>
            <person name="Stacey G."/>
            <person name="Emerich D."/>
            <person name="Vermeglio A."/>
            <person name="Medigue C."/>
            <person name="Sadowsky M."/>
        </authorList>
    </citation>
    <scope>NUCLEOTIDE SEQUENCE [LARGE SCALE GENOMIC DNA]</scope>
    <source>
        <strain>ORS 278</strain>
    </source>
</reference>
<protein>
    <recommendedName>
        <fullName evidence="1">Probable potassium transport system protein Kup 1</fullName>
    </recommendedName>
</protein>
<accession>A4YN81</accession>
<keyword id="KW-0997">Cell inner membrane</keyword>
<keyword id="KW-1003">Cell membrane</keyword>
<keyword id="KW-0406">Ion transport</keyword>
<keyword id="KW-0472">Membrane</keyword>
<keyword id="KW-0630">Potassium</keyword>
<keyword id="KW-0633">Potassium transport</keyword>
<keyword id="KW-1185">Reference proteome</keyword>
<keyword id="KW-0769">Symport</keyword>
<keyword id="KW-0812">Transmembrane</keyword>
<keyword id="KW-1133">Transmembrane helix</keyword>
<keyword id="KW-0813">Transport</keyword>